<reference key="1">
    <citation type="journal article" date="2010" name="Genome Biol. Evol.">
        <title>Continuing evolution of Burkholderia mallei through genome reduction and large-scale rearrangements.</title>
        <authorList>
            <person name="Losada L."/>
            <person name="Ronning C.M."/>
            <person name="DeShazer D."/>
            <person name="Woods D."/>
            <person name="Fedorova N."/>
            <person name="Kim H.S."/>
            <person name="Shabalina S.A."/>
            <person name="Pearson T.R."/>
            <person name="Brinkac L."/>
            <person name="Tan P."/>
            <person name="Nandi T."/>
            <person name="Crabtree J."/>
            <person name="Badger J."/>
            <person name="Beckstrom-Sternberg S."/>
            <person name="Saqib M."/>
            <person name="Schutzer S.E."/>
            <person name="Keim P."/>
            <person name="Nierman W.C."/>
        </authorList>
    </citation>
    <scope>NUCLEOTIDE SEQUENCE [LARGE SCALE GENOMIC DNA]</scope>
    <source>
        <strain>1106a</strain>
    </source>
</reference>
<gene>
    <name evidence="1" type="primary">rsmG</name>
    <name type="ordered locus">BURPS1106A_4055</name>
</gene>
<sequence>MTVQQRRRPPIASRETLQALLSEGAQALGVALSDAQRSALLDYVALLAKWNAVYNLTAIRDPRQMLIQHILDSLSIVPHLGAHGAAAAALDVGSGGGLPGVVLAIALPGWRVTLNDIVHKKSAFQNQAKAELKLGNLSVVTGRVETLRPGADVPAKFDVIVSRAFADLADFVTLARHLVAPGGSIWAMKGVRPDEEIGRLPDGARVKQMIRLTVPSLDAERHLIEVELDEAI</sequence>
<dbReference type="EC" id="2.1.1.170" evidence="1"/>
<dbReference type="EMBL" id="CP000572">
    <property type="protein sequence ID" value="ABN91656.1"/>
    <property type="status" value="ALT_INIT"/>
    <property type="molecule type" value="Genomic_DNA"/>
</dbReference>
<dbReference type="RefSeq" id="WP_004524513.1">
    <property type="nucleotide sequence ID" value="NC_009076.1"/>
</dbReference>
<dbReference type="SMR" id="A3P103"/>
<dbReference type="GeneID" id="93062035"/>
<dbReference type="KEGG" id="bpl:BURPS1106A_4055"/>
<dbReference type="HOGENOM" id="CLU_065341_2_0_4"/>
<dbReference type="Proteomes" id="UP000006738">
    <property type="component" value="Chromosome I"/>
</dbReference>
<dbReference type="GO" id="GO:0005829">
    <property type="term" value="C:cytosol"/>
    <property type="evidence" value="ECO:0007669"/>
    <property type="project" value="TreeGrafter"/>
</dbReference>
<dbReference type="GO" id="GO:0070043">
    <property type="term" value="F:rRNA (guanine-N7-)-methyltransferase activity"/>
    <property type="evidence" value="ECO:0007669"/>
    <property type="project" value="UniProtKB-UniRule"/>
</dbReference>
<dbReference type="CDD" id="cd02440">
    <property type="entry name" value="AdoMet_MTases"/>
    <property type="match status" value="1"/>
</dbReference>
<dbReference type="Gene3D" id="3.40.50.150">
    <property type="entry name" value="Vaccinia Virus protein VP39"/>
    <property type="match status" value="1"/>
</dbReference>
<dbReference type="HAMAP" id="MF_00074">
    <property type="entry name" value="16SrRNA_methyltr_G"/>
    <property type="match status" value="1"/>
</dbReference>
<dbReference type="InterPro" id="IPR003682">
    <property type="entry name" value="rRNA_ssu_MeTfrase_G"/>
</dbReference>
<dbReference type="InterPro" id="IPR029063">
    <property type="entry name" value="SAM-dependent_MTases_sf"/>
</dbReference>
<dbReference type="NCBIfam" id="TIGR00138">
    <property type="entry name" value="rsmG_gidB"/>
    <property type="match status" value="1"/>
</dbReference>
<dbReference type="PANTHER" id="PTHR31760">
    <property type="entry name" value="S-ADENOSYL-L-METHIONINE-DEPENDENT METHYLTRANSFERASES SUPERFAMILY PROTEIN"/>
    <property type="match status" value="1"/>
</dbReference>
<dbReference type="PANTHER" id="PTHR31760:SF0">
    <property type="entry name" value="S-ADENOSYL-L-METHIONINE-DEPENDENT METHYLTRANSFERASES SUPERFAMILY PROTEIN"/>
    <property type="match status" value="1"/>
</dbReference>
<dbReference type="Pfam" id="PF02527">
    <property type="entry name" value="GidB"/>
    <property type="match status" value="1"/>
</dbReference>
<dbReference type="PIRSF" id="PIRSF003078">
    <property type="entry name" value="GidB"/>
    <property type="match status" value="1"/>
</dbReference>
<dbReference type="SUPFAM" id="SSF53335">
    <property type="entry name" value="S-adenosyl-L-methionine-dependent methyltransferases"/>
    <property type="match status" value="1"/>
</dbReference>
<accession>A3P103</accession>
<comment type="function">
    <text evidence="1">Specifically methylates the N7 position of guanine in position 527 of 16S rRNA.</text>
</comment>
<comment type="catalytic activity">
    <reaction evidence="1">
        <text>guanosine(527) in 16S rRNA + S-adenosyl-L-methionine = N(7)-methylguanosine(527) in 16S rRNA + S-adenosyl-L-homocysteine</text>
        <dbReference type="Rhea" id="RHEA:42732"/>
        <dbReference type="Rhea" id="RHEA-COMP:10209"/>
        <dbReference type="Rhea" id="RHEA-COMP:10210"/>
        <dbReference type="ChEBI" id="CHEBI:57856"/>
        <dbReference type="ChEBI" id="CHEBI:59789"/>
        <dbReference type="ChEBI" id="CHEBI:74269"/>
        <dbReference type="ChEBI" id="CHEBI:74480"/>
        <dbReference type="EC" id="2.1.1.170"/>
    </reaction>
</comment>
<comment type="subcellular location">
    <subcellularLocation>
        <location evidence="1">Cytoplasm</location>
    </subcellularLocation>
</comment>
<comment type="similarity">
    <text evidence="1">Belongs to the methyltransferase superfamily. RNA methyltransferase RsmG family.</text>
</comment>
<comment type="sequence caution" evidence="2">
    <conflict type="erroneous initiation">
        <sequence resource="EMBL-CDS" id="ABN91656"/>
    </conflict>
</comment>
<evidence type="ECO:0000255" key="1">
    <source>
        <dbReference type="HAMAP-Rule" id="MF_00074"/>
    </source>
</evidence>
<evidence type="ECO:0000305" key="2"/>
<proteinExistence type="inferred from homology"/>
<keyword id="KW-0963">Cytoplasm</keyword>
<keyword id="KW-0489">Methyltransferase</keyword>
<keyword id="KW-0698">rRNA processing</keyword>
<keyword id="KW-0949">S-adenosyl-L-methionine</keyword>
<keyword id="KW-0808">Transferase</keyword>
<organism>
    <name type="scientific">Burkholderia pseudomallei (strain 1106a)</name>
    <dbReference type="NCBI Taxonomy" id="357348"/>
    <lineage>
        <taxon>Bacteria</taxon>
        <taxon>Pseudomonadati</taxon>
        <taxon>Pseudomonadota</taxon>
        <taxon>Betaproteobacteria</taxon>
        <taxon>Burkholderiales</taxon>
        <taxon>Burkholderiaceae</taxon>
        <taxon>Burkholderia</taxon>
        <taxon>pseudomallei group</taxon>
    </lineage>
</organism>
<feature type="chain" id="PRO_0000335323" description="Ribosomal RNA small subunit methyltransferase G">
    <location>
        <begin position="1"/>
        <end position="232"/>
    </location>
</feature>
<feature type="binding site" evidence="1">
    <location>
        <position position="93"/>
    </location>
    <ligand>
        <name>S-adenosyl-L-methionine</name>
        <dbReference type="ChEBI" id="CHEBI:59789"/>
    </ligand>
</feature>
<feature type="binding site" evidence="1">
    <location>
        <position position="98"/>
    </location>
    <ligand>
        <name>S-adenosyl-L-methionine</name>
        <dbReference type="ChEBI" id="CHEBI:59789"/>
    </ligand>
</feature>
<feature type="binding site" evidence="1">
    <location>
        <begin position="144"/>
        <end position="145"/>
    </location>
    <ligand>
        <name>S-adenosyl-L-methionine</name>
        <dbReference type="ChEBI" id="CHEBI:59789"/>
    </ligand>
</feature>
<feature type="binding site" evidence="1">
    <location>
        <position position="163"/>
    </location>
    <ligand>
        <name>S-adenosyl-L-methionine</name>
        <dbReference type="ChEBI" id="CHEBI:59789"/>
    </ligand>
</feature>
<name>RSMG_BURP0</name>
<protein>
    <recommendedName>
        <fullName evidence="1">Ribosomal RNA small subunit methyltransferase G</fullName>
        <ecNumber evidence="1">2.1.1.170</ecNumber>
    </recommendedName>
    <alternativeName>
        <fullName evidence="1">16S rRNA 7-methylguanosine methyltransferase</fullName>
        <shortName evidence="1">16S rRNA m7G methyltransferase</shortName>
    </alternativeName>
</protein>